<name>CSPA_BACCE</name>
<gene>
    <name type="primary">cspA</name>
</gene>
<sequence>MTVTGQVKWFNNEKGFGFIEVPGENDVFVHFSAIETDGFKSLEEGQKVSFEIEDGNRGPQAKNVIKL</sequence>
<protein>
    <recommendedName>
        <fullName>Major cold shock protein CspA</fullName>
    </recommendedName>
</protein>
<comment type="function">
    <text>Can bind to ATTGG and CCAAT motifs (Y-box motifs) of single-stranded oligonucleotides.</text>
</comment>
<comment type="subunit">
    <text>Homodimer.</text>
</comment>
<comment type="subcellular location">
    <subcellularLocation>
        <location>Cytoplasm</location>
    </subcellularLocation>
</comment>
<comment type="induction">
    <text>In response to low temperature.</text>
</comment>
<feature type="chain" id="PRO_0000100282" description="Major cold shock protein CspA">
    <location>
        <begin position="1"/>
        <end position="67"/>
    </location>
</feature>
<feature type="domain" description="CSD">
    <location>
        <begin position="5"/>
        <end position="64"/>
    </location>
</feature>
<feature type="sequence conflict" description="In Ref. 1; AA sequence." evidence="1" ref="1">
    <original>G</original>
    <variation>GG</variation>
    <location>
        <position position="23"/>
    </location>
</feature>
<keyword id="KW-0010">Activator</keyword>
<keyword id="KW-0963">Cytoplasm</keyword>
<keyword id="KW-0903">Direct protein sequencing</keyword>
<keyword id="KW-0238">DNA-binding</keyword>
<keyword id="KW-0346">Stress response</keyword>
<keyword id="KW-0804">Transcription</keyword>
<keyword id="KW-0805">Transcription regulation</keyword>
<evidence type="ECO:0000305" key="1"/>
<accession>Q45096</accession>
<reference key="1">
    <citation type="journal article" date="1996" name="J. Bacteriol.">
        <title>Identification and purification of a family of dimeric major cold shock protein homologs from the psychrotrophic Bacillus cereus WSBC 10201.</title>
        <authorList>
            <person name="Mayr B."/>
            <person name="Kaplan T."/>
            <person name="Lechner S."/>
            <person name="Scherer S."/>
        </authorList>
    </citation>
    <scope>NUCLEOTIDE SEQUENCE [GENOMIC DNA]</scope>
    <scope>PROTEIN SEQUENCE OF 1-28</scope>
    <source>
        <strain>WSBC 10201</strain>
    </source>
</reference>
<organism>
    <name type="scientific">Bacillus cereus</name>
    <dbReference type="NCBI Taxonomy" id="1396"/>
    <lineage>
        <taxon>Bacteria</taxon>
        <taxon>Bacillati</taxon>
        <taxon>Bacillota</taxon>
        <taxon>Bacilli</taxon>
        <taxon>Bacillales</taxon>
        <taxon>Bacillaceae</taxon>
        <taxon>Bacillus</taxon>
        <taxon>Bacillus cereus group</taxon>
    </lineage>
</organism>
<dbReference type="EMBL" id="X93039">
    <property type="protein sequence ID" value="CAA63607.1"/>
    <property type="molecule type" value="Genomic_DNA"/>
</dbReference>
<dbReference type="RefSeq" id="WP_002011282.1">
    <property type="nucleotide sequence ID" value="NZ_MUAJ01000011.1"/>
</dbReference>
<dbReference type="SMR" id="Q45096"/>
<dbReference type="GeneID" id="66263835"/>
<dbReference type="eggNOG" id="COG1278">
    <property type="taxonomic scope" value="Bacteria"/>
</dbReference>
<dbReference type="GO" id="GO:0005737">
    <property type="term" value="C:cytoplasm"/>
    <property type="evidence" value="ECO:0007669"/>
    <property type="project" value="UniProtKB-SubCell"/>
</dbReference>
<dbReference type="GO" id="GO:0003677">
    <property type="term" value="F:DNA binding"/>
    <property type="evidence" value="ECO:0007669"/>
    <property type="project" value="UniProtKB-KW"/>
</dbReference>
<dbReference type="CDD" id="cd04458">
    <property type="entry name" value="CSP_CDS"/>
    <property type="match status" value="1"/>
</dbReference>
<dbReference type="FunFam" id="2.40.50.140:FF:000006">
    <property type="entry name" value="Cold shock protein CspC"/>
    <property type="match status" value="1"/>
</dbReference>
<dbReference type="Gene3D" id="6.20.370.130">
    <property type="match status" value="1"/>
</dbReference>
<dbReference type="Gene3D" id="2.40.50.140">
    <property type="entry name" value="Nucleic acid-binding proteins"/>
    <property type="match status" value="1"/>
</dbReference>
<dbReference type="InterPro" id="IPR012156">
    <property type="entry name" value="Cold_shock_CspA"/>
</dbReference>
<dbReference type="InterPro" id="IPR050181">
    <property type="entry name" value="Cold_shock_domain"/>
</dbReference>
<dbReference type="InterPro" id="IPR011129">
    <property type="entry name" value="CSD"/>
</dbReference>
<dbReference type="InterPro" id="IPR019844">
    <property type="entry name" value="CSD_CS"/>
</dbReference>
<dbReference type="InterPro" id="IPR002059">
    <property type="entry name" value="CSP_DNA-bd"/>
</dbReference>
<dbReference type="InterPro" id="IPR012340">
    <property type="entry name" value="NA-bd_OB-fold"/>
</dbReference>
<dbReference type="PANTHER" id="PTHR11544">
    <property type="entry name" value="COLD SHOCK DOMAIN CONTAINING PROTEINS"/>
    <property type="match status" value="1"/>
</dbReference>
<dbReference type="Pfam" id="PF00313">
    <property type="entry name" value="CSD"/>
    <property type="match status" value="1"/>
</dbReference>
<dbReference type="PIRSF" id="PIRSF002599">
    <property type="entry name" value="Cold_shock_A"/>
    <property type="match status" value="1"/>
</dbReference>
<dbReference type="PRINTS" id="PR00050">
    <property type="entry name" value="COLDSHOCK"/>
</dbReference>
<dbReference type="SMART" id="SM00357">
    <property type="entry name" value="CSP"/>
    <property type="match status" value="1"/>
</dbReference>
<dbReference type="SUPFAM" id="SSF50249">
    <property type="entry name" value="Nucleic acid-binding proteins"/>
    <property type="match status" value="1"/>
</dbReference>
<dbReference type="PROSITE" id="PS00352">
    <property type="entry name" value="CSD_1"/>
    <property type="match status" value="1"/>
</dbReference>
<dbReference type="PROSITE" id="PS51857">
    <property type="entry name" value="CSD_2"/>
    <property type="match status" value="1"/>
</dbReference>
<proteinExistence type="evidence at protein level"/>